<gene>
    <name evidence="1" type="primary">ahcY</name>
    <name type="ordered locus">PSEEN5037</name>
</gene>
<dbReference type="EC" id="3.13.2.1" evidence="1"/>
<dbReference type="EMBL" id="CT573326">
    <property type="protein sequence ID" value="CAK17671.1"/>
    <property type="molecule type" value="Genomic_DNA"/>
</dbReference>
<dbReference type="RefSeq" id="WP_011536031.1">
    <property type="nucleotide sequence ID" value="NC_008027.1"/>
</dbReference>
<dbReference type="SMR" id="Q1I3W5"/>
<dbReference type="STRING" id="384676.PSEEN5037"/>
<dbReference type="GeneID" id="32807976"/>
<dbReference type="KEGG" id="pen:PSEEN5037"/>
<dbReference type="eggNOG" id="COG0499">
    <property type="taxonomic scope" value="Bacteria"/>
</dbReference>
<dbReference type="HOGENOM" id="CLU_025194_2_1_6"/>
<dbReference type="OrthoDB" id="9802717at2"/>
<dbReference type="UniPathway" id="UPA00314">
    <property type="reaction ID" value="UER00076"/>
</dbReference>
<dbReference type="Proteomes" id="UP000000658">
    <property type="component" value="Chromosome"/>
</dbReference>
<dbReference type="GO" id="GO:0005829">
    <property type="term" value="C:cytosol"/>
    <property type="evidence" value="ECO:0007669"/>
    <property type="project" value="TreeGrafter"/>
</dbReference>
<dbReference type="GO" id="GO:0004013">
    <property type="term" value="F:adenosylhomocysteinase activity"/>
    <property type="evidence" value="ECO:0007669"/>
    <property type="project" value="UniProtKB-UniRule"/>
</dbReference>
<dbReference type="GO" id="GO:0071269">
    <property type="term" value="P:L-homocysteine biosynthetic process"/>
    <property type="evidence" value="ECO:0007669"/>
    <property type="project" value="UniProtKB-UniRule"/>
</dbReference>
<dbReference type="GO" id="GO:0006730">
    <property type="term" value="P:one-carbon metabolic process"/>
    <property type="evidence" value="ECO:0007669"/>
    <property type="project" value="UniProtKB-KW"/>
</dbReference>
<dbReference type="GO" id="GO:0033353">
    <property type="term" value="P:S-adenosylmethionine cycle"/>
    <property type="evidence" value="ECO:0007669"/>
    <property type="project" value="TreeGrafter"/>
</dbReference>
<dbReference type="CDD" id="cd00401">
    <property type="entry name" value="SAHH"/>
    <property type="match status" value="1"/>
</dbReference>
<dbReference type="FunFam" id="3.40.50.1480:FF:000006">
    <property type="entry name" value="Adenosylhomocysteinase"/>
    <property type="match status" value="1"/>
</dbReference>
<dbReference type="FunFam" id="3.40.50.1480:FF:000007">
    <property type="entry name" value="Adenosylhomocysteinase"/>
    <property type="match status" value="1"/>
</dbReference>
<dbReference type="FunFam" id="3.40.50.720:FF:000155">
    <property type="entry name" value="Adenosylhomocysteinase"/>
    <property type="match status" value="1"/>
</dbReference>
<dbReference type="Gene3D" id="3.40.50.1480">
    <property type="entry name" value="Adenosylhomocysteinase-like"/>
    <property type="match status" value="3"/>
</dbReference>
<dbReference type="Gene3D" id="3.40.50.720">
    <property type="entry name" value="NAD(P)-binding Rossmann-like Domain"/>
    <property type="match status" value="1"/>
</dbReference>
<dbReference type="HAMAP" id="MF_00563">
    <property type="entry name" value="AdoHcyase"/>
    <property type="match status" value="1"/>
</dbReference>
<dbReference type="InterPro" id="IPR042172">
    <property type="entry name" value="Adenosylhomocyst_ase-like_sf"/>
</dbReference>
<dbReference type="InterPro" id="IPR000043">
    <property type="entry name" value="Adenosylhomocysteinase-like"/>
</dbReference>
<dbReference type="InterPro" id="IPR015878">
    <property type="entry name" value="Ado_hCys_hydrolase_NAD-bd"/>
</dbReference>
<dbReference type="InterPro" id="IPR036291">
    <property type="entry name" value="NAD(P)-bd_dom_sf"/>
</dbReference>
<dbReference type="InterPro" id="IPR020082">
    <property type="entry name" value="S-Ado-L-homoCys_hydrolase_CS"/>
</dbReference>
<dbReference type="NCBIfam" id="TIGR00936">
    <property type="entry name" value="ahcY"/>
    <property type="match status" value="1"/>
</dbReference>
<dbReference type="NCBIfam" id="NF004005">
    <property type="entry name" value="PRK05476.2-3"/>
    <property type="match status" value="1"/>
</dbReference>
<dbReference type="PANTHER" id="PTHR23420">
    <property type="entry name" value="ADENOSYLHOMOCYSTEINASE"/>
    <property type="match status" value="1"/>
</dbReference>
<dbReference type="PANTHER" id="PTHR23420:SF0">
    <property type="entry name" value="ADENOSYLHOMOCYSTEINASE"/>
    <property type="match status" value="1"/>
</dbReference>
<dbReference type="Pfam" id="PF05221">
    <property type="entry name" value="AdoHcyase"/>
    <property type="match status" value="1"/>
</dbReference>
<dbReference type="Pfam" id="PF00670">
    <property type="entry name" value="AdoHcyase_NAD"/>
    <property type="match status" value="1"/>
</dbReference>
<dbReference type="PIRSF" id="PIRSF001109">
    <property type="entry name" value="Ad_hcy_hydrolase"/>
    <property type="match status" value="1"/>
</dbReference>
<dbReference type="SMART" id="SM00996">
    <property type="entry name" value="AdoHcyase"/>
    <property type="match status" value="1"/>
</dbReference>
<dbReference type="SMART" id="SM00997">
    <property type="entry name" value="AdoHcyase_NAD"/>
    <property type="match status" value="1"/>
</dbReference>
<dbReference type="SUPFAM" id="SSF52283">
    <property type="entry name" value="Formate/glycerate dehydrogenase catalytic domain-like"/>
    <property type="match status" value="1"/>
</dbReference>
<dbReference type="SUPFAM" id="SSF51735">
    <property type="entry name" value="NAD(P)-binding Rossmann-fold domains"/>
    <property type="match status" value="1"/>
</dbReference>
<dbReference type="PROSITE" id="PS00738">
    <property type="entry name" value="ADOHCYASE_1"/>
    <property type="match status" value="1"/>
</dbReference>
<dbReference type="PROSITE" id="PS00739">
    <property type="entry name" value="ADOHCYASE_2"/>
    <property type="match status" value="1"/>
</dbReference>
<evidence type="ECO:0000255" key="1">
    <source>
        <dbReference type="HAMAP-Rule" id="MF_00563"/>
    </source>
</evidence>
<feature type="chain" id="PRO_1000024749" description="Adenosylhomocysteinase">
    <location>
        <begin position="1"/>
        <end position="469"/>
    </location>
</feature>
<feature type="binding site" evidence="1">
    <location>
        <position position="63"/>
    </location>
    <ligand>
        <name>substrate</name>
    </ligand>
</feature>
<feature type="binding site" evidence="1">
    <location>
        <position position="139"/>
    </location>
    <ligand>
        <name>substrate</name>
    </ligand>
</feature>
<feature type="binding site" evidence="1">
    <location>
        <position position="164"/>
    </location>
    <ligand>
        <name>substrate</name>
    </ligand>
</feature>
<feature type="binding site" evidence="1">
    <location>
        <begin position="165"/>
        <end position="167"/>
    </location>
    <ligand>
        <name>NAD(+)</name>
        <dbReference type="ChEBI" id="CHEBI:57540"/>
    </ligand>
</feature>
<feature type="binding site" evidence="1">
    <location>
        <position position="194"/>
    </location>
    <ligand>
        <name>substrate</name>
    </ligand>
</feature>
<feature type="binding site" evidence="1">
    <location>
        <position position="198"/>
    </location>
    <ligand>
        <name>substrate</name>
    </ligand>
</feature>
<feature type="binding site" evidence="1">
    <location>
        <position position="199"/>
    </location>
    <ligand>
        <name>NAD(+)</name>
        <dbReference type="ChEBI" id="CHEBI:57540"/>
    </ligand>
</feature>
<feature type="binding site" evidence="1">
    <location>
        <begin position="228"/>
        <end position="233"/>
    </location>
    <ligand>
        <name>NAD(+)</name>
        <dbReference type="ChEBI" id="CHEBI:57540"/>
    </ligand>
</feature>
<feature type="binding site" evidence="1">
    <location>
        <position position="251"/>
    </location>
    <ligand>
        <name>NAD(+)</name>
        <dbReference type="ChEBI" id="CHEBI:57540"/>
    </ligand>
</feature>
<feature type="binding site" evidence="1">
    <location>
        <position position="300"/>
    </location>
    <ligand>
        <name>NAD(+)</name>
        <dbReference type="ChEBI" id="CHEBI:57540"/>
    </ligand>
</feature>
<feature type="binding site" evidence="1">
    <location>
        <begin position="321"/>
        <end position="323"/>
    </location>
    <ligand>
        <name>NAD(+)</name>
        <dbReference type="ChEBI" id="CHEBI:57540"/>
    </ligand>
</feature>
<feature type="binding site" evidence="1">
    <location>
        <position position="375"/>
    </location>
    <ligand>
        <name>NAD(+)</name>
        <dbReference type="ChEBI" id="CHEBI:57540"/>
    </ligand>
</feature>
<keyword id="KW-0963">Cytoplasm</keyword>
<keyword id="KW-0378">Hydrolase</keyword>
<keyword id="KW-0520">NAD</keyword>
<keyword id="KW-0554">One-carbon metabolism</keyword>
<proteinExistence type="inferred from homology"/>
<name>SAHH_PSEE4</name>
<reference key="1">
    <citation type="journal article" date="2006" name="Nat. Biotechnol.">
        <title>Complete genome sequence of the entomopathogenic and metabolically versatile soil bacterium Pseudomonas entomophila.</title>
        <authorList>
            <person name="Vodovar N."/>
            <person name="Vallenet D."/>
            <person name="Cruveiller S."/>
            <person name="Rouy Z."/>
            <person name="Barbe V."/>
            <person name="Acosta C."/>
            <person name="Cattolico L."/>
            <person name="Jubin C."/>
            <person name="Lajus A."/>
            <person name="Segurens B."/>
            <person name="Vacherie B."/>
            <person name="Wincker P."/>
            <person name="Weissenbach J."/>
            <person name="Lemaitre B."/>
            <person name="Medigue C."/>
            <person name="Boccard F."/>
        </authorList>
    </citation>
    <scope>NUCLEOTIDE SEQUENCE [LARGE SCALE GENOMIC DNA]</scope>
    <source>
        <strain>L48</strain>
    </source>
</reference>
<protein>
    <recommendedName>
        <fullName evidence="1">Adenosylhomocysteinase</fullName>
        <ecNumber evidence="1">3.13.2.1</ecNumber>
    </recommendedName>
    <alternativeName>
        <fullName evidence="1">S-adenosyl-L-homocysteine hydrolase</fullName>
        <shortName evidence="1">AdoHcyase</shortName>
    </alternativeName>
</protein>
<sequence>MSAVNTPAGFSDFKVADISLADWGRKEVIIAESEMPALMGLRRKYQAEQPLKGAKIIGCIHMTIQTAVLIETLVALGAEVRWSSCNIFSTQDQAAAAIAAAGIPVFAWKGETEQEYEWCIEQTILKDGQPWDANMVLDDGGDLTEILHKKYPAMLEKIHGVTEETTTGVHRLLDMLAKGELKVPAINVNDSVTKSKNDNKYGCRHSLNDAIKRGTDHLLSGKQALVIGYGDVGKGSAQSLRQEGMIVKVTEVDPICAMQACMDGFEVVSPFKDGINTGTEAGINKDLLGRIDLIVTTTGNVNVCDANMLKALKKRAVVCNIGHFDNEIDTAFMRKHWAWEEVKPQVHKIHRTGAGTFDPQNDDYLILLAEGRLVNLGNATGHPSRIMDGSFANQVLAQIFLFEQKFAELPAAKKAERLTVEVLPKKLDEEVALEMVRGFGGVVTQLTPQQAEYIGVTVEGPFKPDAYRY</sequence>
<accession>Q1I3W5</accession>
<comment type="function">
    <text evidence="1">May play a key role in the regulation of the intracellular concentration of adenosylhomocysteine.</text>
</comment>
<comment type="catalytic activity">
    <reaction evidence="1">
        <text>S-adenosyl-L-homocysteine + H2O = L-homocysteine + adenosine</text>
        <dbReference type="Rhea" id="RHEA:21708"/>
        <dbReference type="ChEBI" id="CHEBI:15377"/>
        <dbReference type="ChEBI" id="CHEBI:16335"/>
        <dbReference type="ChEBI" id="CHEBI:57856"/>
        <dbReference type="ChEBI" id="CHEBI:58199"/>
        <dbReference type="EC" id="3.13.2.1"/>
    </reaction>
</comment>
<comment type="cofactor">
    <cofactor evidence="1">
        <name>NAD(+)</name>
        <dbReference type="ChEBI" id="CHEBI:57540"/>
    </cofactor>
    <text evidence="1">Binds 1 NAD(+) per subunit.</text>
</comment>
<comment type="pathway">
    <text evidence="1">Amino-acid biosynthesis; L-homocysteine biosynthesis; L-homocysteine from S-adenosyl-L-homocysteine: step 1/1.</text>
</comment>
<comment type="subcellular location">
    <subcellularLocation>
        <location evidence="1">Cytoplasm</location>
    </subcellularLocation>
</comment>
<comment type="similarity">
    <text evidence="1">Belongs to the adenosylhomocysteinase family.</text>
</comment>
<organism>
    <name type="scientific">Pseudomonas entomophila (strain L48)</name>
    <dbReference type="NCBI Taxonomy" id="384676"/>
    <lineage>
        <taxon>Bacteria</taxon>
        <taxon>Pseudomonadati</taxon>
        <taxon>Pseudomonadota</taxon>
        <taxon>Gammaproteobacteria</taxon>
        <taxon>Pseudomonadales</taxon>
        <taxon>Pseudomonadaceae</taxon>
        <taxon>Pseudomonas</taxon>
    </lineage>
</organism>